<protein>
    <recommendedName>
        <fullName evidence="4">AA9 family lytic polysaccharide monooxygenase B</fullName>
        <shortName evidence="4">LPMO9B</shortName>
        <ecNumber evidence="3">1.14.99.56</ecNumber>
    </recommendedName>
    <alternativeName>
        <fullName evidence="5">Cellulase LPMO9B</fullName>
    </alternativeName>
    <alternativeName>
        <fullName evidence="5">Endo-beta-1,4-glucanase LPMO9B</fullName>
        <shortName evidence="5">Endoglucanase LPMO9B</shortName>
    </alternativeName>
    <alternativeName>
        <fullName evidence="5">Glycosyl hydrolase 61 family protein LPMO9B</fullName>
    </alternativeName>
</protein>
<organism>
    <name type="scientific">Heterobasidion irregulare (strain TC 32-1)</name>
    <dbReference type="NCBI Taxonomy" id="747525"/>
    <lineage>
        <taxon>Eukaryota</taxon>
        <taxon>Fungi</taxon>
        <taxon>Dikarya</taxon>
        <taxon>Basidiomycota</taxon>
        <taxon>Agaricomycotina</taxon>
        <taxon>Agaricomycetes</taxon>
        <taxon>Russulales</taxon>
        <taxon>Bondarzewiaceae</taxon>
        <taxon>Heterobasidion</taxon>
        <taxon>Heterobasidion annosum species complex</taxon>
    </lineage>
</organism>
<feature type="signal peptide" evidence="2">
    <location>
        <begin position="1"/>
        <end position="19"/>
    </location>
</feature>
<feature type="chain" id="PRO_5004844531" description="AA9 family lytic polysaccharide monooxygenase B">
    <location>
        <begin position="20"/>
        <end position="244"/>
    </location>
</feature>
<feature type="binding site" evidence="3 7">
    <location>
        <position position="20"/>
    </location>
    <ligand>
        <name>Cu(2+)</name>
        <dbReference type="ChEBI" id="CHEBI:29036"/>
        <note>catalytic</note>
    </ligand>
</feature>
<feature type="binding site" evidence="6 7">
    <location>
        <position position="39"/>
    </location>
    <ligand>
        <name>(1,4-beta-D-glucosyl)n</name>
        <dbReference type="ChEBI" id="CHEBI:18246"/>
    </ligand>
</feature>
<feature type="binding site" evidence="3 7">
    <location>
        <position position="99"/>
    </location>
    <ligand>
        <name>Cu(2+)</name>
        <dbReference type="ChEBI" id="CHEBI:29036"/>
        <note>catalytic</note>
    </ligand>
</feature>
<feature type="binding site" evidence="1">
    <location>
        <position position="178"/>
    </location>
    <ligand>
        <name>O2</name>
        <dbReference type="ChEBI" id="CHEBI:15379"/>
    </ligand>
</feature>
<feature type="binding site" evidence="1">
    <location>
        <position position="184"/>
    </location>
    <ligand>
        <name>O2</name>
        <dbReference type="ChEBI" id="CHEBI:15379"/>
    </ligand>
</feature>
<feature type="binding site" evidence="1">
    <location>
        <position position="186"/>
    </location>
    <ligand>
        <name>Cu(2+)</name>
        <dbReference type="ChEBI" id="CHEBI:29036"/>
        <note>catalytic</note>
    </ligand>
</feature>
<feature type="binding site" evidence="6 7">
    <location>
        <position position="224"/>
    </location>
    <ligand>
        <name>(1,4-beta-D-glucosyl)n</name>
        <dbReference type="ChEBI" id="CHEBI:18246"/>
    </ligand>
</feature>
<feature type="binding site" evidence="6 7">
    <location>
        <position position="226"/>
    </location>
    <ligand>
        <name>(1,4-beta-D-glucosyl)n</name>
        <dbReference type="ChEBI" id="CHEBI:18246"/>
    </ligand>
</feature>
<feature type="binding site" evidence="6 7">
    <location>
        <position position="229"/>
    </location>
    <ligand>
        <name>(1,4-beta-D-glucosyl)n</name>
        <dbReference type="ChEBI" id="CHEBI:18246"/>
    </ligand>
</feature>
<feature type="glycosylation site" description="N-linked (GlcNAc...) asparagine" evidence="3 7">
    <location>
        <position position="152"/>
    </location>
</feature>
<feature type="glycosylation site" description="N-linked (GlcNAc...) asparagine" evidence="3 7">
    <location>
        <position position="233"/>
    </location>
</feature>
<feature type="disulfide bond" evidence="3 7">
    <location>
        <begin position="68"/>
        <end position="189"/>
    </location>
</feature>
<feature type="disulfide bond" evidence="3 7">
    <location>
        <begin position="111"/>
        <end position="115"/>
    </location>
</feature>
<feature type="strand" evidence="8">
    <location>
        <begin position="23"/>
        <end position="28"/>
    </location>
</feature>
<feature type="strand" evidence="8">
    <location>
        <begin position="31"/>
        <end position="34"/>
    </location>
</feature>
<feature type="strand" evidence="8">
    <location>
        <begin position="47"/>
        <end position="49"/>
    </location>
</feature>
<feature type="turn" evidence="8">
    <location>
        <begin position="64"/>
        <end position="68"/>
    </location>
</feature>
<feature type="helix" evidence="8">
    <location>
        <begin position="76"/>
        <end position="78"/>
    </location>
</feature>
<feature type="strand" evidence="8">
    <location>
        <begin position="82"/>
        <end position="85"/>
    </location>
</feature>
<feature type="strand" evidence="8">
    <location>
        <begin position="89"/>
        <end position="96"/>
    </location>
</feature>
<feature type="strand" evidence="8">
    <location>
        <begin position="104"/>
        <end position="110"/>
    </location>
</feature>
<feature type="helix" evidence="8">
    <location>
        <begin position="120"/>
        <end position="122"/>
    </location>
</feature>
<feature type="strand" evidence="8">
    <location>
        <begin position="125"/>
        <end position="131"/>
    </location>
</feature>
<feature type="strand" evidence="8">
    <location>
        <begin position="133"/>
        <end position="136"/>
    </location>
</feature>
<feature type="turn" evidence="8">
    <location>
        <begin position="138"/>
        <end position="140"/>
    </location>
</feature>
<feature type="strand" evidence="8">
    <location>
        <begin position="141"/>
        <end position="143"/>
    </location>
</feature>
<feature type="helix" evidence="8">
    <location>
        <begin position="144"/>
        <end position="150"/>
    </location>
</feature>
<feature type="turn" evidence="8">
    <location>
        <begin position="151"/>
        <end position="153"/>
    </location>
</feature>
<feature type="strand" evidence="8">
    <location>
        <begin position="154"/>
        <end position="158"/>
    </location>
</feature>
<feature type="strand" evidence="8">
    <location>
        <begin position="165"/>
        <end position="176"/>
    </location>
</feature>
<feature type="strand" evidence="8">
    <location>
        <begin position="184"/>
        <end position="196"/>
    </location>
</feature>
<feature type="helix" evidence="8">
    <location>
        <begin position="204"/>
        <end position="206"/>
    </location>
</feature>
<feature type="turn" evidence="8">
    <location>
        <begin position="210"/>
        <end position="212"/>
    </location>
</feature>
<feature type="turn" evidence="8">
    <location>
        <begin position="219"/>
        <end position="221"/>
    </location>
</feature>
<feature type="helix" evidence="8">
    <location>
        <begin position="225"/>
        <end position="227"/>
    </location>
</feature>
<evidence type="ECO:0000250" key="1">
    <source>
        <dbReference type="UniProtKB" id="Q1K8B6"/>
    </source>
</evidence>
<evidence type="ECO:0000255" key="2"/>
<evidence type="ECO:0000269" key="3">
    <source>
    </source>
</evidence>
<evidence type="ECO:0000303" key="4">
    <source>
    </source>
</evidence>
<evidence type="ECO:0000305" key="5"/>
<evidence type="ECO:0000305" key="6">
    <source>
    </source>
</evidence>
<evidence type="ECO:0007744" key="7">
    <source>
        <dbReference type="PDB" id="5NNS"/>
    </source>
</evidence>
<evidence type="ECO:0007829" key="8">
    <source>
        <dbReference type="PDB" id="5NNS"/>
    </source>
</evidence>
<name>LP9B_HETIT</name>
<keyword id="KW-0002">3D-structure</keyword>
<keyword id="KW-0119">Carbohydrate metabolism</keyword>
<keyword id="KW-0136">Cellulose degradation</keyword>
<keyword id="KW-0186">Copper</keyword>
<keyword id="KW-1015">Disulfide bond</keyword>
<keyword id="KW-0325">Glycoprotein</keyword>
<keyword id="KW-0479">Metal-binding</keyword>
<keyword id="KW-0503">Monooxygenase</keyword>
<keyword id="KW-0560">Oxidoreductase</keyword>
<keyword id="KW-0624">Polysaccharide degradation</keyword>
<keyword id="KW-1185">Reference proteome</keyword>
<keyword id="KW-0964">Secreted</keyword>
<keyword id="KW-0732">Signal</keyword>
<dbReference type="EC" id="1.14.99.56" evidence="3"/>
<dbReference type="EMBL" id="KI925454">
    <property type="protein sequence ID" value="ETW87087.1"/>
    <property type="molecule type" value="Genomic_DNA"/>
</dbReference>
<dbReference type="PDB" id="5NNS">
    <property type="method" value="X-ray"/>
    <property type="resolution" value="2.10 A"/>
    <property type="chains" value="A/B=20-244"/>
</dbReference>
<dbReference type="PDBsum" id="5NNS"/>
<dbReference type="SMR" id="W4KMP1"/>
<dbReference type="STRING" id="747525.W4KMP1"/>
<dbReference type="KEGG" id="hir:HETIRDRAFT_166613"/>
<dbReference type="eggNOG" id="ENOG502SJF0">
    <property type="taxonomic scope" value="Eukaryota"/>
</dbReference>
<dbReference type="HOGENOM" id="CLU_031730_1_1_1"/>
<dbReference type="InParanoid" id="W4KMP1"/>
<dbReference type="OrthoDB" id="4849160at2759"/>
<dbReference type="Proteomes" id="UP000030671">
    <property type="component" value="Unassembled WGS sequence"/>
</dbReference>
<dbReference type="GO" id="GO:0005576">
    <property type="term" value="C:extracellular region"/>
    <property type="evidence" value="ECO:0007669"/>
    <property type="project" value="UniProtKB-SubCell"/>
</dbReference>
<dbReference type="GO" id="GO:0046872">
    <property type="term" value="F:metal ion binding"/>
    <property type="evidence" value="ECO:0007669"/>
    <property type="project" value="UniProtKB-KW"/>
</dbReference>
<dbReference type="GO" id="GO:0004497">
    <property type="term" value="F:monooxygenase activity"/>
    <property type="evidence" value="ECO:0007669"/>
    <property type="project" value="UniProtKB-KW"/>
</dbReference>
<dbReference type="GO" id="GO:0030245">
    <property type="term" value="P:cellulose catabolic process"/>
    <property type="evidence" value="ECO:0007669"/>
    <property type="project" value="UniProtKB-KW"/>
</dbReference>
<dbReference type="CDD" id="cd21175">
    <property type="entry name" value="LPMO_AA9"/>
    <property type="match status" value="1"/>
</dbReference>
<dbReference type="Gene3D" id="2.70.50.70">
    <property type="match status" value="1"/>
</dbReference>
<dbReference type="InterPro" id="IPR049892">
    <property type="entry name" value="AA9"/>
</dbReference>
<dbReference type="InterPro" id="IPR005103">
    <property type="entry name" value="AA9_LPMO"/>
</dbReference>
<dbReference type="PANTHER" id="PTHR33353:SF19">
    <property type="entry name" value="GLYCOSYLHYDROLASE FAMILY 61-8 PROTEIN"/>
    <property type="match status" value="1"/>
</dbReference>
<dbReference type="PANTHER" id="PTHR33353">
    <property type="entry name" value="PUTATIVE (AFU_ORTHOLOGUE AFUA_1G12560)-RELATED"/>
    <property type="match status" value="1"/>
</dbReference>
<dbReference type="Pfam" id="PF03443">
    <property type="entry name" value="AA9"/>
    <property type="match status" value="1"/>
</dbReference>
<comment type="function">
    <text evidence="3">Lytic polysaccharide monooxygenase (LPMO) that depolymerizes crystalline and amorphous polysaccharides via the oxidation of scissile alpha- or beta-(1-4)-glycosidic bonds, yielding specifically C1 oxidation product (PubMed:29660793). Catalysis by LPMOs requires the reduction of the active-site copper from Cu(II) to Cu(I) by a reducing agent and H(2)O(2) or O(2) as a cosubstrate (PubMed:29660793). Displays catalytic activity on insoluble cellulose using I-beta microfibril model substrate (PubMed:29660793).</text>
</comment>
<comment type="catalytic activity">
    <reaction evidence="3">
        <text>[(1-&gt;4)-beta-D-glucosyl]n+m + reduced acceptor + O2 = 4-dehydro-beta-D-glucosyl-[(1-&gt;4)-beta-D-glucosyl]n-1 + [(1-&gt;4)-beta-D-glucosyl]m + acceptor + H2O.</text>
        <dbReference type="EC" id="1.14.99.56"/>
    </reaction>
</comment>
<comment type="cofactor">
    <cofactor evidence="3">
        <name>Cu(2+)</name>
        <dbReference type="ChEBI" id="CHEBI:29036"/>
    </cofactor>
    <text evidence="3">Binds 1 copper ion per subunit.</text>
</comment>
<comment type="subcellular location">
    <subcellularLocation>
        <location evidence="6">Secreted</location>
    </subcellularLocation>
</comment>
<comment type="biotechnology">
    <text evidence="3">Lignocellulose is the most abundant polymeric composite on Earth and is a recalcitrant but promising renewable substrate for industrial biotechnology applications. Together with cellobiose dehydrogenases (CDHs) an enzymatic system capable of oxidative cellulose cleavage is formed, which increases the efficiency of cellulases and put LPMOs at focus of biofuel research.</text>
</comment>
<comment type="similarity">
    <text evidence="5">Belongs to the polysaccharide monooxygenase AA9 family.</text>
</comment>
<sequence>MFLVPLLAALSLSAPKVAAHGGVLAYSLAGTWYNGFVPYNTPTGQSTIQREWDTYNPITDPTDASISCNINGASLGSAQKSATVAAGSSVTAYWNQWPHTIGPVMVYMANCGGDCTTATTSSLEWFKINQVGLVSGTLTSGTWGMGQLVANNNSWTTSIPSSLAAGNYILRHELLAIHTSNQPQFYPECAQLIVTGGEGATPPASYLVKLPGAYSMSDPGVNIDIYSHETETNYTIPGPAVWQG</sequence>
<accession>W4KMP1</accession>
<reference key="1">
    <citation type="journal article" date="2012" name="New Phytol.">
        <title>Insight into trade-off between wood decay and parasitism from the genome of a fungal forest pathogen.</title>
        <authorList>
            <person name="Olson A."/>
            <person name="Aerts A."/>
            <person name="Asiegbu F."/>
            <person name="Belbahri L."/>
            <person name="Bouzid O."/>
            <person name="Broberg A."/>
            <person name="Canback B."/>
            <person name="Coutinho P.M."/>
            <person name="Cullen D."/>
            <person name="Dalman K."/>
            <person name="Deflorio G."/>
            <person name="van Diepen L.T."/>
            <person name="Dunand C."/>
            <person name="Duplessis S."/>
            <person name="Durling M."/>
            <person name="Gonthier P."/>
            <person name="Grimwood J."/>
            <person name="Fossdal C.G."/>
            <person name="Hansson D."/>
            <person name="Henrissat B."/>
            <person name="Hietala A."/>
            <person name="Himmelstrand K."/>
            <person name="Hoffmeister D."/>
            <person name="Hogberg N."/>
            <person name="James T.Y."/>
            <person name="Karlsson M."/>
            <person name="Kohler A."/>
            <person name="Kues U."/>
            <person name="Lee Y.H."/>
            <person name="Lin Y.C."/>
            <person name="Lind M."/>
            <person name="Lindquist E."/>
            <person name="Lombard V."/>
            <person name="Lucas S."/>
            <person name="Lunden K."/>
            <person name="Morin E."/>
            <person name="Murat C."/>
            <person name="Park J."/>
            <person name="Raffaello T."/>
            <person name="Rouze P."/>
            <person name="Salamov A."/>
            <person name="Schmutz J."/>
            <person name="Solheim H."/>
            <person name="Stahlberg J."/>
            <person name="Velez H."/>
            <person name="de Vries R.P."/>
            <person name="Wiebenga A."/>
            <person name="Woodward S."/>
            <person name="Yakovlev I."/>
            <person name="Garbelotto M."/>
            <person name="Martin F."/>
            <person name="Grigoriev I.V."/>
            <person name="Stenlid J."/>
        </authorList>
    </citation>
    <scope>NUCLEOTIDE SEQUENCE [LARGE SCALE GENOMIC DNA]</scope>
    <source>
        <strain>TC 32-1</strain>
    </source>
</reference>
<reference evidence="7" key="2">
    <citation type="journal article" date="2018" name="FEBS J.">
        <title>Structural and molecular dynamics studies of a C1-oxidizing lytic polysaccharide monooxygenase from Heterobasidion irregulare reveal amino acids important for substrate recognition.</title>
        <authorList>
            <person name="Liu B."/>
            <person name="Kognole A.A."/>
            <person name="Wu M."/>
            <person name="Westereng B."/>
            <person name="Crowley M.F."/>
            <person name="Kim S."/>
            <person name="Dimarogona M."/>
            <person name="Payne C.M."/>
            <person name="Sandgren M."/>
        </authorList>
    </citation>
    <scope>X-RAY CRYSTALLOGRAPHY (2.10 ANGSTROMS) OF 20-244 IN COMPLEX WITH COPPER AND CELLULOSE ANALOG</scope>
    <scope>COFACTOR</scope>
    <scope>DISULFIDE BONDS</scope>
    <scope>GLYCOSYLATION AT ASN-152 AND ASN-233</scope>
    <scope>FUNCTION</scope>
    <scope>CATALYTIC ACTIVITY</scope>
</reference>
<gene>
    <name evidence="4" type="primary">LPMO9B</name>
    <name type="ORF">HETIRDRAFT_166613</name>
</gene>
<proteinExistence type="evidence at protein level"/>